<reference key="1">
    <citation type="journal article" date="2007" name="Genes Dev.">
        <title>New insights into Acinetobacter baumannii pathogenesis revealed by high-density pyrosequencing and transposon mutagenesis.</title>
        <authorList>
            <person name="Smith M.G."/>
            <person name="Gianoulis T.A."/>
            <person name="Pukatzki S."/>
            <person name="Mekalanos J.J."/>
            <person name="Ornston L.N."/>
            <person name="Gerstein M."/>
            <person name="Snyder M."/>
        </authorList>
    </citation>
    <scope>NUCLEOTIDE SEQUENCE [LARGE SCALE GENOMIC DNA]</scope>
    <source>
        <strain>ATCC 17978 / DSM 105126 / CIP 53.77 / LMG 1025 / NCDC KC755 / 5377</strain>
    </source>
</reference>
<proteinExistence type="inferred from homology"/>
<dbReference type="EC" id="2.3.2.29" evidence="1"/>
<dbReference type="EMBL" id="CP000521">
    <property type="protein sequence ID" value="ABO11305.2"/>
    <property type="molecule type" value="Genomic_DNA"/>
</dbReference>
<dbReference type="RefSeq" id="WP_000844343.1">
    <property type="nucleotide sequence ID" value="NZ_CP053098.1"/>
</dbReference>
<dbReference type="SMR" id="A3M311"/>
<dbReference type="KEGG" id="acb:A1S_0873"/>
<dbReference type="HOGENOM" id="CLU_077607_0_0_6"/>
<dbReference type="GO" id="GO:0005737">
    <property type="term" value="C:cytoplasm"/>
    <property type="evidence" value="ECO:0007669"/>
    <property type="project" value="UniProtKB-SubCell"/>
</dbReference>
<dbReference type="GO" id="GO:0004057">
    <property type="term" value="F:arginyl-tRNA--protein transferase activity"/>
    <property type="evidence" value="ECO:0007669"/>
    <property type="project" value="InterPro"/>
</dbReference>
<dbReference type="GO" id="GO:0008914">
    <property type="term" value="F:leucyl-tRNA--protein transferase activity"/>
    <property type="evidence" value="ECO:0007669"/>
    <property type="project" value="UniProtKB-UniRule"/>
</dbReference>
<dbReference type="GO" id="GO:0071596">
    <property type="term" value="P:ubiquitin-dependent protein catabolic process via the N-end rule pathway"/>
    <property type="evidence" value="ECO:0007669"/>
    <property type="project" value="InterPro"/>
</dbReference>
<dbReference type="HAMAP" id="MF_00689">
    <property type="entry name" value="Bpt"/>
    <property type="match status" value="1"/>
</dbReference>
<dbReference type="InterPro" id="IPR016181">
    <property type="entry name" value="Acyl_CoA_acyltransferase"/>
</dbReference>
<dbReference type="InterPro" id="IPR017138">
    <property type="entry name" value="Asp_Glu_LeuTrfase"/>
</dbReference>
<dbReference type="InterPro" id="IPR030700">
    <property type="entry name" value="N-end_Aminoacyl_Trfase"/>
</dbReference>
<dbReference type="InterPro" id="IPR007472">
    <property type="entry name" value="N-end_Aminoacyl_Trfase_C"/>
</dbReference>
<dbReference type="InterPro" id="IPR007471">
    <property type="entry name" value="N-end_Aminoacyl_Trfase_N"/>
</dbReference>
<dbReference type="NCBIfam" id="NF002341">
    <property type="entry name" value="PRK01305.1-1"/>
    <property type="match status" value="1"/>
</dbReference>
<dbReference type="NCBIfam" id="NF002342">
    <property type="entry name" value="PRK01305.1-3"/>
    <property type="match status" value="1"/>
</dbReference>
<dbReference type="NCBIfam" id="NF002346">
    <property type="entry name" value="PRK01305.2-3"/>
    <property type="match status" value="1"/>
</dbReference>
<dbReference type="PANTHER" id="PTHR21367">
    <property type="entry name" value="ARGININE-TRNA-PROTEIN TRANSFERASE 1"/>
    <property type="match status" value="1"/>
</dbReference>
<dbReference type="PANTHER" id="PTHR21367:SF1">
    <property type="entry name" value="ARGINYL-TRNA--PROTEIN TRANSFERASE 1"/>
    <property type="match status" value="1"/>
</dbReference>
<dbReference type="Pfam" id="PF04377">
    <property type="entry name" value="ATE_C"/>
    <property type="match status" value="1"/>
</dbReference>
<dbReference type="Pfam" id="PF04376">
    <property type="entry name" value="ATE_N"/>
    <property type="match status" value="1"/>
</dbReference>
<dbReference type="PIRSF" id="PIRSF037208">
    <property type="entry name" value="ATE_pro_prd"/>
    <property type="match status" value="1"/>
</dbReference>
<dbReference type="SUPFAM" id="SSF55729">
    <property type="entry name" value="Acyl-CoA N-acyltransferases (Nat)"/>
    <property type="match status" value="1"/>
</dbReference>
<feature type="chain" id="PRO_1000131966" description="Aspartate/glutamate leucyltransferase">
    <location>
        <begin position="1"/>
        <end position="271"/>
    </location>
</feature>
<accession>A3M311</accession>
<evidence type="ECO:0000255" key="1">
    <source>
        <dbReference type="HAMAP-Rule" id="MF_00689"/>
    </source>
</evidence>
<organism>
    <name type="scientific">Acinetobacter baumannii (strain ATCC 17978 / DSM 105126 / CIP 53.77 / LMG 1025 / NCDC KC755 / 5377)</name>
    <dbReference type="NCBI Taxonomy" id="400667"/>
    <lineage>
        <taxon>Bacteria</taxon>
        <taxon>Pseudomonadati</taxon>
        <taxon>Pseudomonadota</taxon>
        <taxon>Gammaproteobacteria</taxon>
        <taxon>Moraxellales</taxon>
        <taxon>Moraxellaceae</taxon>
        <taxon>Acinetobacter</taxon>
        <taxon>Acinetobacter calcoaceticus/baumannii complex</taxon>
    </lineage>
</organism>
<gene>
    <name evidence="1" type="primary">bpt</name>
    <name type="ordered locus">A1S_0873</name>
</gene>
<sequence length="271" mass="31947">MKSYHPKSLLNDLQYYITPPHDCSYLENKSARMVFLDPIHRIDVVTLSELSRLGFRRSGDFVYRPECHLCRQCLSCRVPVADFQMNSMQKKAWKRNQDLTMTVLPTRQASQIHYDLYERYINERHADGDMFPPSLDQFEKFLVHSCTDSFFLELWKDNRLISVSTCDLMDDGLSAVYTFFDPDEHRRSLGVYSILNQIEYVKTLGLEYVYLGYWVPHSAKMNYKSQYTPLELLLDGQWRRLNRSLSPEEINQLGNSLMTTLPSEWNNLIIK</sequence>
<keyword id="KW-0012">Acyltransferase</keyword>
<keyword id="KW-0963">Cytoplasm</keyword>
<keyword id="KW-0808">Transferase</keyword>
<comment type="function">
    <text evidence="1">Functions in the N-end rule pathway of protein degradation where it conjugates Leu from its aminoacyl-tRNA to the N-termini of proteins containing an N-terminal aspartate or glutamate.</text>
</comment>
<comment type="catalytic activity">
    <reaction evidence="1">
        <text>N-terminal L-glutamyl-[protein] + L-leucyl-tRNA(Leu) = N-terminal L-leucyl-L-glutamyl-[protein] + tRNA(Leu) + H(+)</text>
        <dbReference type="Rhea" id="RHEA:50412"/>
        <dbReference type="Rhea" id="RHEA-COMP:9613"/>
        <dbReference type="Rhea" id="RHEA-COMP:9622"/>
        <dbReference type="Rhea" id="RHEA-COMP:12664"/>
        <dbReference type="Rhea" id="RHEA-COMP:12668"/>
        <dbReference type="ChEBI" id="CHEBI:15378"/>
        <dbReference type="ChEBI" id="CHEBI:64721"/>
        <dbReference type="ChEBI" id="CHEBI:78442"/>
        <dbReference type="ChEBI" id="CHEBI:78494"/>
        <dbReference type="ChEBI" id="CHEBI:133041"/>
        <dbReference type="EC" id="2.3.2.29"/>
    </reaction>
</comment>
<comment type="catalytic activity">
    <reaction evidence="1">
        <text>N-terminal L-aspartyl-[protein] + L-leucyl-tRNA(Leu) = N-terminal L-leucyl-L-aspartyl-[protein] + tRNA(Leu) + H(+)</text>
        <dbReference type="Rhea" id="RHEA:50420"/>
        <dbReference type="Rhea" id="RHEA-COMP:9613"/>
        <dbReference type="Rhea" id="RHEA-COMP:9622"/>
        <dbReference type="Rhea" id="RHEA-COMP:12669"/>
        <dbReference type="Rhea" id="RHEA-COMP:12674"/>
        <dbReference type="ChEBI" id="CHEBI:15378"/>
        <dbReference type="ChEBI" id="CHEBI:64720"/>
        <dbReference type="ChEBI" id="CHEBI:78442"/>
        <dbReference type="ChEBI" id="CHEBI:78494"/>
        <dbReference type="ChEBI" id="CHEBI:133042"/>
        <dbReference type="EC" id="2.3.2.29"/>
    </reaction>
</comment>
<comment type="subcellular location">
    <subcellularLocation>
        <location evidence="1">Cytoplasm</location>
    </subcellularLocation>
</comment>
<comment type="similarity">
    <text evidence="1">Belongs to the R-transferase family. Bpt subfamily.</text>
</comment>
<name>BPT_ACIBT</name>
<protein>
    <recommendedName>
        <fullName evidence="1">Aspartate/glutamate leucyltransferase</fullName>
        <ecNumber evidence="1">2.3.2.29</ecNumber>
    </recommendedName>
</protein>